<protein>
    <recommendedName>
        <fullName evidence="1">Urease accessory protein UreF 1</fullName>
    </recommendedName>
</protein>
<sequence length="228" mass="24686">MNIITTTTTDTTTALLRLMAWLSPVFPVGSFSYSHGLERAVHDGYVADTATMSDWLRWLVTRGSGWNDAVLCAESWRRAVAKGDLVEVAELAEALAGSRERHMETMLQGEAFLAAARSWPSSVFDRLPADCPYPVAVGAVAGANKVSLGLTLAAFLQAFCINLLQASIRLSVMGQNGVTATMSDLEPVLAETATRIEKTSLSDLGSATYISDIMAMKHETQHSRLFRT</sequence>
<evidence type="ECO:0000255" key="1">
    <source>
        <dbReference type="HAMAP-Rule" id="MF_01385"/>
    </source>
</evidence>
<proteinExistence type="inferred from homology"/>
<dbReference type="EMBL" id="CP000758">
    <property type="protein sequence ID" value="ABS13068.1"/>
    <property type="molecule type" value="Genomic_DNA"/>
</dbReference>
<dbReference type="RefSeq" id="WP_011982507.1">
    <property type="nucleotide sequence ID" value="NC_009667.1"/>
</dbReference>
<dbReference type="SMR" id="A6WVR4"/>
<dbReference type="STRING" id="439375.Oant_0337"/>
<dbReference type="KEGG" id="oan:Oant_0337"/>
<dbReference type="PATRIC" id="fig|439375.7.peg.359"/>
<dbReference type="eggNOG" id="COG0830">
    <property type="taxonomic scope" value="Bacteria"/>
</dbReference>
<dbReference type="HOGENOM" id="CLU_049215_2_0_5"/>
<dbReference type="Proteomes" id="UP000002301">
    <property type="component" value="Chromosome 1"/>
</dbReference>
<dbReference type="GO" id="GO:0005737">
    <property type="term" value="C:cytoplasm"/>
    <property type="evidence" value="ECO:0007669"/>
    <property type="project" value="UniProtKB-SubCell"/>
</dbReference>
<dbReference type="GO" id="GO:0016151">
    <property type="term" value="F:nickel cation binding"/>
    <property type="evidence" value="ECO:0007669"/>
    <property type="project" value="UniProtKB-UniRule"/>
</dbReference>
<dbReference type="Gene3D" id="1.10.4190.10">
    <property type="entry name" value="Urease accessory protein UreF"/>
    <property type="match status" value="1"/>
</dbReference>
<dbReference type="HAMAP" id="MF_01385">
    <property type="entry name" value="UreF"/>
    <property type="match status" value="1"/>
</dbReference>
<dbReference type="InterPro" id="IPR002639">
    <property type="entry name" value="UreF"/>
</dbReference>
<dbReference type="InterPro" id="IPR038277">
    <property type="entry name" value="UreF_sf"/>
</dbReference>
<dbReference type="PANTHER" id="PTHR33620">
    <property type="entry name" value="UREASE ACCESSORY PROTEIN F"/>
    <property type="match status" value="1"/>
</dbReference>
<dbReference type="PANTHER" id="PTHR33620:SF1">
    <property type="entry name" value="UREASE ACCESSORY PROTEIN F"/>
    <property type="match status" value="1"/>
</dbReference>
<dbReference type="Pfam" id="PF01730">
    <property type="entry name" value="UreF"/>
    <property type="match status" value="1"/>
</dbReference>
<dbReference type="PIRSF" id="PIRSF009467">
    <property type="entry name" value="Ureas_acces_UreF"/>
    <property type="match status" value="1"/>
</dbReference>
<name>UREF1_BRUA4</name>
<comment type="function">
    <text evidence="1">Required for maturation of urease via the functional incorporation of the urease nickel metallocenter.</text>
</comment>
<comment type="subunit">
    <text evidence="1">UreD, UreF and UreG form a complex that acts as a GTP-hydrolysis-dependent molecular chaperone, activating the urease apoprotein by helping to assemble the nickel containing metallocenter of UreC. The UreE protein probably delivers the nickel.</text>
</comment>
<comment type="subcellular location">
    <subcellularLocation>
        <location evidence="1">Cytoplasm</location>
    </subcellularLocation>
</comment>
<comment type="similarity">
    <text evidence="1">Belongs to the UreF family.</text>
</comment>
<feature type="chain" id="PRO_0000344141" description="Urease accessory protein UreF 1">
    <location>
        <begin position="1"/>
        <end position="228"/>
    </location>
</feature>
<organism>
    <name type="scientific">Brucella anthropi (strain ATCC 49188 / DSM 6882 / CCUG 24695 / JCM 21032 / LMG 3331 / NBRC 15819 / NCTC 12168 / Alc 37)</name>
    <name type="common">Ochrobactrum anthropi</name>
    <dbReference type="NCBI Taxonomy" id="439375"/>
    <lineage>
        <taxon>Bacteria</taxon>
        <taxon>Pseudomonadati</taxon>
        <taxon>Pseudomonadota</taxon>
        <taxon>Alphaproteobacteria</taxon>
        <taxon>Hyphomicrobiales</taxon>
        <taxon>Brucellaceae</taxon>
        <taxon>Brucella/Ochrobactrum group</taxon>
        <taxon>Brucella</taxon>
    </lineage>
</organism>
<reference key="1">
    <citation type="journal article" date="2011" name="J. Bacteriol.">
        <title>Genome of Ochrobactrum anthropi ATCC 49188 T, a versatile opportunistic pathogen and symbiont of several eukaryotic hosts.</title>
        <authorList>
            <person name="Chain P.S."/>
            <person name="Lang D.M."/>
            <person name="Comerci D.J."/>
            <person name="Malfatti S.A."/>
            <person name="Vergez L.M."/>
            <person name="Shin M."/>
            <person name="Ugalde R.A."/>
            <person name="Garcia E."/>
            <person name="Tolmasky M.E."/>
        </authorList>
    </citation>
    <scope>NUCLEOTIDE SEQUENCE [LARGE SCALE GENOMIC DNA]</scope>
    <source>
        <strain>ATCC 49188 / DSM 6882 / CCUG 24695 / JCM 21032 / LMG 3331 / NBRC 15819 / NCTC 12168 / Alc 37</strain>
    </source>
</reference>
<keyword id="KW-0143">Chaperone</keyword>
<keyword id="KW-0963">Cytoplasm</keyword>
<keyword id="KW-0996">Nickel insertion</keyword>
<keyword id="KW-1185">Reference proteome</keyword>
<gene>
    <name evidence="1" type="primary">ureF1</name>
    <name type="ordered locus">Oant_0337</name>
</gene>
<accession>A6WVR4</accession>